<name>BR1_RANTE</name>
<feature type="peptide" id="PRO_0000043550" description="Brevinin-1T">
    <location>
        <begin position="1"/>
        <end position="20"/>
    </location>
</feature>
<feature type="disulfide bond" evidence="1">
    <location>
        <begin position="14"/>
        <end position="20"/>
    </location>
</feature>
<accession>P82232</accession>
<comment type="function">
    <text>Antibacterial activity against representative Gram-negative and Gram-positive bacteria and exhibits a very high hemolytic activity.</text>
</comment>
<comment type="subcellular location">
    <subcellularLocation>
        <location>Secreted</location>
    </subcellularLocation>
</comment>
<comment type="tissue specificity">
    <text>Expressed by the skin glands.</text>
</comment>
<comment type="similarity">
    <text evidence="2">Belongs to the frog skin active peptide (FSAP) family. Brevinin subfamily.</text>
</comment>
<proteinExistence type="evidence at protein level"/>
<protein>
    <recommendedName>
        <fullName>Brevinin-1T</fullName>
    </recommendedName>
</protein>
<organism>
    <name type="scientific">Rana temporaria</name>
    <name type="common">European common frog</name>
    <dbReference type="NCBI Taxonomy" id="8407"/>
    <lineage>
        <taxon>Eukaryota</taxon>
        <taxon>Metazoa</taxon>
        <taxon>Chordata</taxon>
        <taxon>Craniata</taxon>
        <taxon>Vertebrata</taxon>
        <taxon>Euteleostomi</taxon>
        <taxon>Amphibia</taxon>
        <taxon>Batrachia</taxon>
        <taxon>Anura</taxon>
        <taxon>Neobatrachia</taxon>
        <taxon>Ranoidea</taxon>
        <taxon>Ranidae</taxon>
        <taxon>Rana</taxon>
        <taxon>Rana</taxon>
    </lineage>
</organism>
<keyword id="KW-0878">Amphibian defense peptide</keyword>
<keyword id="KW-0044">Antibiotic</keyword>
<keyword id="KW-0929">Antimicrobial</keyword>
<keyword id="KW-0204">Cytolysis</keyword>
<keyword id="KW-0903">Direct protein sequencing</keyword>
<keyword id="KW-1015">Disulfide bond</keyword>
<keyword id="KW-0354">Hemolysis</keyword>
<keyword id="KW-0964">Secreted</keyword>
<evidence type="ECO:0000250" key="1"/>
<evidence type="ECO:0000305" key="2"/>
<reference key="1">
    <citation type="journal article" date="1998" name="Biopolymers">
        <title>Antimicrobial peptides from amphibian skin: what do they tell us?</title>
        <authorList>
            <person name="Simmaco M."/>
            <person name="Mignogna G."/>
            <person name="Barra D."/>
        </authorList>
    </citation>
    <scope>PROTEIN SEQUENCE</scope>
    <source>
        <tissue>Skin secretion</tissue>
    </source>
</reference>
<sequence>VNPIILGVLPKFVCLITKKC</sequence>
<dbReference type="GO" id="GO:0005576">
    <property type="term" value="C:extracellular region"/>
    <property type="evidence" value="ECO:0000314"/>
    <property type="project" value="UniProtKB"/>
</dbReference>
<dbReference type="GO" id="GO:0042742">
    <property type="term" value="P:defense response to bacterium"/>
    <property type="evidence" value="ECO:0007669"/>
    <property type="project" value="UniProtKB-KW"/>
</dbReference>
<dbReference type="GO" id="GO:0031640">
    <property type="term" value="P:killing of cells of another organism"/>
    <property type="evidence" value="ECO:0007669"/>
    <property type="project" value="UniProtKB-KW"/>
</dbReference>
<dbReference type="InterPro" id="IPR012520">
    <property type="entry name" value="Antimicrobial_frog_1"/>
</dbReference>
<dbReference type="Pfam" id="PF08018">
    <property type="entry name" value="Antimicrobial_1"/>
    <property type="match status" value="1"/>
</dbReference>